<proteinExistence type="inferred from homology"/>
<dbReference type="EMBL" id="CR860967">
    <property type="protein sequence ID" value="CAH93069.1"/>
    <property type="molecule type" value="mRNA"/>
</dbReference>
<dbReference type="RefSeq" id="NP_001126817.1">
    <property type="nucleotide sequence ID" value="NM_001133345.1"/>
</dbReference>
<dbReference type="SMR" id="Q5R597"/>
<dbReference type="FunCoup" id="Q5R597">
    <property type="interactions" value="1224"/>
</dbReference>
<dbReference type="STRING" id="9601.ENSPPYP00000017639"/>
<dbReference type="GeneID" id="100173822"/>
<dbReference type="KEGG" id="pon:100173822"/>
<dbReference type="CTD" id="27089"/>
<dbReference type="eggNOG" id="KOG4116">
    <property type="taxonomic scope" value="Eukaryota"/>
</dbReference>
<dbReference type="InParanoid" id="Q5R597"/>
<dbReference type="OrthoDB" id="6683853at2759"/>
<dbReference type="Proteomes" id="UP000001595">
    <property type="component" value="Unplaced"/>
</dbReference>
<dbReference type="GO" id="GO:0005743">
    <property type="term" value="C:mitochondrial inner membrane"/>
    <property type="evidence" value="ECO:0007669"/>
    <property type="project" value="UniProtKB-SubCell"/>
</dbReference>
<dbReference type="GO" id="GO:0045275">
    <property type="term" value="C:respiratory chain complex III"/>
    <property type="evidence" value="ECO:0007669"/>
    <property type="project" value="InterPro"/>
</dbReference>
<dbReference type="GO" id="GO:0006122">
    <property type="term" value="P:mitochondrial electron transport, ubiquinol to cytochrome c"/>
    <property type="evidence" value="ECO:0007669"/>
    <property type="project" value="InterPro"/>
</dbReference>
<dbReference type="FunFam" id="1.20.5.210:FF:000001">
    <property type="entry name" value="Cytochrome b-c1 complex subunit 8"/>
    <property type="match status" value="1"/>
</dbReference>
<dbReference type="Gene3D" id="1.20.5.210">
    <property type="entry name" value="Cytochrome b-c1 complex subunit 8"/>
    <property type="match status" value="1"/>
</dbReference>
<dbReference type="InterPro" id="IPR004205">
    <property type="entry name" value="Cyt_bc1_su8"/>
</dbReference>
<dbReference type="InterPro" id="IPR036642">
    <property type="entry name" value="Cyt_bc1_su8_sf"/>
</dbReference>
<dbReference type="PANTHER" id="PTHR12119:SF2">
    <property type="entry name" value="CYTOCHROME B-C1 COMPLEX SUBUNIT 8"/>
    <property type="match status" value="1"/>
</dbReference>
<dbReference type="PANTHER" id="PTHR12119">
    <property type="entry name" value="UBIQUINOL-CYTOCHROME C REDUCTASE COMPLEX UBIQUINONE-BINDING PROTEIN QP-C"/>
    <property type="match status" value="1"/>
</dbReference>
<dbReference type="Pfam" id="PF02939">
    <property type="entry name" value="UcrQ"/>
    <property type="match status" value="1"/>
</dbReference>
<dbReference type="SUPFAM" id="SSF81508">
    <property type="entry name" value="Ubiquinone-binding protein QP-C of cytochrome bc1 complex (Ubiquinol-cytochrome c reductase)"/>
    <property type="match status" value="1"/>
</dbReference>
<name>QCR8_PONAB</name>
<accession>Q5R597</accession>
<feature type="chain" id="PRO_0000193546" description="Cytochrome b-c1 complex subunit 8">
    <location>
        <begin position="1"/>
        <end position="82"/>
    </location>
</feature>
<feature type="topological domain" description="Mitochondrial matrix" evidence="3">
    <location>
        <begin position="1"/>
        <end position="39"/>
    </location>
</feature>
<feature type="transmembrane region" description="Helical" evidence="3">
    <location>
        <begin position="40"/>
        <end position="68"/>
    </location>
</feature>
<feature type="topological domain" description="Mitochondrial intermembrane" evidence="3">
    <location>
        <begin position="69"/>
        <end position="82"/>
    </location>
</feature>
<feature type="modified residue" description="Phosphoserine" evidence="1">
    <location>
        <position position="16"/>
    </location>
</feature>
<feature type="modified residue" description="N6-acetyllysine; alternate" evidence="4">
    <location>
        <position position="33"/>
    </location>
</feature>
<feature type="modified residue" description="N6-succinyllysine; alternate" evidence="4">
    <location>
        <position position="33"/>
    </location>
</feature>
<protein>
    <recommendedName>
        <fullName>Cytochrome b-c1 complex subunit 8</fullName>
    </recommendedName>
    <alternativeName>
        <fullName>Complex III subunit 8</fullName>
    </alternativeName>
    <alternativeName>
        <fullName>Complex III subunit VIII</fullName>
    </alternativeName>
    <alternativeName>
        <fullName>Ubiquinol-cytochrome c reductase complex 9.5 kDa protein</fullName>
    </alternativeName>
    <alternativeName>
        <fullName>Ubiquinol-cytochrome c reductase complex ubiquinone-binding protein QP-C</fullName>
    </alternativeName>
</protein>
<keyword id="KW-0007">Acetylation</keyword>
<keyword id="KW-0249">Electron transport</keyword>
<keyword id="KW-0472">Membrane</keyword>
<keyword id="KW-0496">Mitochondrion</keyword>
<keyword id="KW-0999">Mitochondrion inner membrane</keyword>
<keyword id="KW-0597">Phosphoprotein</keyword>
<keyword id="KW-1185">Reference proteome</keyword>
<keyword id="KW-0679">Respiratory chain</keyword>
<keyword id="KW-0812">Transmembrane</keyword>
<keyword id="KW-1133">Transmembrane helix</keyword>
<keyword id="KW-0813">Transport</keyword>
<gene>
    <name type="primary">UQCRQ</name>
</gene>
<sequence>MGREFGNLTRMRHVISYSLSPFEQRAHPHVFTKGIPNVLRRFRESFFRVAPQFVVFYLIYTWGTEEFERSKRKNPAAYENDK</sequence>
<reference key="1">
    <citation type="submission" date="2004-11" db="EMBL/GenBank/DDBJ databases">
        <authorList>
            <consortium name="The German cDNA consortium"/>
        </authorList>
    </citation>
    <scope>NUCLEOTIDE SEQUENCE [LARGE SCALE MRNA]</scope>
    <source>
        <tissue>Kidney</tissue>
    </source>
</reference>
<evidence type="ECO:0000250" key="1">
    <source>
        <dbReference type="UniProtKB" id="O14949"/>
    </source>
</evidence>
<evidence type="ECO:0000250" key="2">
    <source>
        <dbReference type="UniProtKB" id="P08525"/>
    </source>
</evidence>
<evidence type="ECO:0000250" key="3">
    <source>
        <dbReference type="UniProtKB" id="P13271"/>
    </source>
</evidence>
<evidence type="ECO:0000250" key="4">
    <source>
        <dbReference type="UniProtKB" id="Q9CQ69"/>
    </source>
</evidence>
<evidence type="ECO:0000305" key="5"/>
<comment type="function">
    <text evidence="2">Component of the ubiquinol-cytochrome c oxidoreductase, a multisubunit transmembrane complex that is part of the mitochondrial electron transport chain which drives oxidative phosphorylation. The respiratory chain contains 3 multisubunit complexes succinate dehydrogenase (complex II, CII), ubiquinol-cytochrome c oxidoreductase (cytochrome b-c1 complex, complex III, CIII) and cytochrome c oxidase (complex IV, CIV), that cooperate to transfer electrons derived from NADH and succinate to molecular oxygen, creating an electrochemical gradient over the inner membrane that drives transmembrane transport and the ATP synthase. The cytochrome b-c1 complex catalyzes electron transfer from ubiquinol to cytochrome c, linking this redox reaction to translocation of protons across the mitochondrial inner membrane, with protons being carried across the membrane as hydrogens on the quinol. In the process called Q cycle, 2 protons are consumed from the matrix, 4 protons are released into the intermembrane space and 2 electrons are passed to cytochrome c.</text>
</comment>
<comment type="subunit">
    <text evidence="1 3 4">Component of the ubiquinol-cytochrome c oxidoreductase (cytochrome b-c1 complex, complex III, CIII), a multisubunit enzyme composed of 11 subunits. The complex is composed of 3 respiratory subunits cytochrome b, cytochrome c1 and Rieske protein UQCRFS1, 2 core protein subunits UQCRC1/QCR1 and UQCRC2/QCR2, and 6 low-molecular weight protein subunits UQCRH/QCR6, UQCRB/QCR7, UQCRQ/QCR8, UQCR10/QCR9, UQCR11/QCR10 and subunit 9, the cleavage product of Rieske protein UQCRFS1 (By similarity). The complex exists as an obligatory dimer and forms supercomplexes (SCs) in the inner mitochondrial membrane with NADH-ubiquinone oxidoreductase (complex I, CI) and cytochrome c oxidase (complex IV, CIV), resulting in different assemblies (supercomplex SCI(1)III(2)IV(1) and megacomplex MCI(2)III(2)IV(2)) (By similarity). Interacts with UQCC6 (By similarity).</text>
</comment>
<comment type="subcellular location">
    <subcellularLocation>
        <location evidence="2">Mitochondrion inner membrane</location>
        <topology evidence="2">Single-pass membrane protein</topology>
    </subcellularLocation>
</comment>
<comment type="similarity">
    <text evidence="5">Belongs to the UQCRQ/QCR8 family.</text>
</comment>
<organism>
    <name type="scientific">Pongo abelii</name>
    <name type="common">Sumatran orangutan</name>
    <name type="synonym">Pongo pygmaeus abelii</name>
    <dbReference type="NCBI Taxonomy" id="9601"/>
    <lineage>
        <taxon>Eukaryota</taxon>
        <taxon>Metazoa</taxon>
        <taxon>Chordata</taxon>
        <taxon>Craniata</taxon>
        <taxon>Vertebrata</taxon>
        <taxon>Euteleostomi</taxon>
        <taxon>Mammalia</taxon>
        <taxon>Eutheria</taxon>
        <taxon>Euarchontoglires</taxon>
        <taxon>Primates</taxon>
        <taxon>Haplorrhini</taxon>
        <taxon>Catarrhini</taxon>
        <taxon>Hominidae</taxon>
        <taxon>Pongo</taxon>
    </lineage>
</organism>